<dbReference type="EC" id="1.5.1.5" evidence="1"/>
<dbReference type="EC" id="3.5.4.9" evidence="1"/>
<dbReference type="EMBL" id="CP000848">
    <property type="protein sequence ID" value="ABV76246.1"/>
    <property type="molecule type" value="Genomic_DNA"/>
</dbReference>
<dbReference type="RefSeq" id="WP_012150830.1">
    <property type="nucleotide sequence ID" value="NZ_CP121767.1"/>
</dbReference>
<dbReference type="SMR" id="A8GS71"/>
<dbReference type="GeneID" id="79937379"/>
<dbReference type="KEGG" id="rri:A1G_03600"/>
<dbReference type="HOGENOM" id="CLU_034045_2_1_5"/>
<dbReference type="UniPathway" id="UPA00193"/>
<dbReference type="Proteomes" id="UP000006832">
    <property type="component" value="Chromosome"/>
</dbReference>
<dbReference type="GO" id="GO:0005829">
    <property type="term" value="C:cytosol"/>
    <property type="evidence" value="ECO:0007669"/>
    <property type="project" value="TreeGrafter"/>
</dbReference>
<dbReference type="GO" id="GO:0004477">
    <property type="term" value="F:methenyltetrahydrofolate cyclohydrolase activity"/>
    <property type="evidence" value="ECO:0007669"/>
    <property type="project" value="UniProtKB-UniRule"/>
</dbReference>
<dbReference type="GO" id="GO:0004488">
    <property type="term" value="F:methylenetetrahydrofolate dehydrogenase (NADP+) activity"/>
    <property type="evidence" value="ECO:0007669"/>
    <property type="project" value="UniProtKB-UniRule"/>
</dbReference>
<dbReference type="GO" id="GO:0000105">
    <property type="term" value="P:L-histidine biosynthetic process"/>
    <property type="evidence" value="ECO:0007669"/>
    <property type="project" value="UniProtKB-KW"/>
</dbReference>
<dbReference type="GO" id="GO:0009086">
    <property type="term" value="P:methionine biosynthetic process"/>
    <property type="evidence" value="ECO:0007669"/>
    <property type="project" value="UniProtKB-KW"/>
</dbReference>
<dbReference type="GO" id="GO:0006164">
    <property type="term" value="P:purine nucleotide biosynthetic process"/>
    <property type="evidence" value="ECO:0007669"/>
    <property type="project" value="UniProtKB-KW"/>
</dbReference>
<dbReference type="GO" id="GO:0035999">
    <property type="term" value="P:tetrahydrofolate interconversion"/>
    <property type="evidence" value="ECO:0007669"/>
    <property type="project" value="UniProtKB-UniRule"/>
</dbReference>
<dbReference type="CDD" id="cd01080">
    <property type="entry name" value="NAD_bind_m-THF_DH_Cyclohyd"/>
    <property type="match status" value="1"/>
</dbReference>
<dbReference type="FunFam" id="3.40.50.720:FF:000094">
    <property type="entry name" value="Bifunctional protein FolD"/>
    <property type="match status" value="1"/>
</dbReference>
<dbReference type="FunFam" id="3.40.50.10860:FF:000005">
    <property type="entry name" value="C-1-tetrahydrofolate synthase, cytoplasmic, putative"/>
    <property type="match status" value="1"/>
</dbReference>
<dbReference type="Gene3D" id="3.40.50.10860">
    <property type="entry name" value="Leucine Dehydrogenase, chain A, domain 1"/>
    <property type="match status" value="1"/>
</dbReference>
<dbReference type="Gene3D" id="3.40.50.720">
    <property type="entry name" value="NAD(P)-binding Rossmann-like Domain"/>
    <property type="match status" value="1"/>
</dbReference>
<dbReference type="HAMAP" id="MF_01576">
    <property type="entry name" value="THF_DHG_CYH"/>
    <property type="match status" value="1"/>
</dbReference>
<dbReference type="InterPro" id="IPR046346">
    <property type="entry name" value="Aminoacid_DH-like_N_sf"/>
</dbReference>
<dbReference type="InterPro" id="IPR036291">
    <property type="entry name" value="NAD(P)-bd_dom_sf"/>
</dbReference>
<dbReference type="InterPro" id="IPR000672">
    <property type="entry name" value="THF_DH/CycHdrlase"/>
</dbReference>
<dbReference type="InterPro" id="IPR020630">
    <property type="entry name" value="THF_DH/CycHdrlase_cat_dom"/>
</dbReference>
<dbReference type="InterPro" id="IPR020867">
    <property type="entry name" value="THF_DH/CycHdrlase_CS"/>
</dbReference>
<dbReference type="InterPro" id="IPR020631">
    <property type="entry name" value="THF_DH/CycHdrlase_NAD-bd_dom"/>
</dbReference>
<dbReference type="NCBIfam" id="NF010768">
    <property type="entry name" value="PRK14171.1"/>
    <property type="match status" value="1"/>
</dbReference>
<dbReference type="PANTHER" id="PTHR48099:SF5">
    <property type="entry name" value="C-1-TETRAHYDROFOLATE SYNTHASE, CYTOPLASMIC"/>
    <property type="match status" value="1"/>
</dbReference>
<dbReference type="PANTHER" id="PTHR48099">
    <property type="entry name" value="C-1-TETRAHYDROFOLATE SYNTHASE, CYTOPLASMIC-RELATED"/>
    <property type="match status" value="1"/>
</dbReference>
<dbReference type="Pfam" id="PF00763">
    <property type="entry name" value="THF_DHG_CYH"/>
    <property type="match status" value="1"/>
</dbReference>
<dbReference type="Pfam" id="PF02882">
    <property type="entry name" value="THF_DHG_CYH_C"/>
    <property type="match status" value="1"/>
</dbReference>
<dbReference type="PRINTS" id="PR00085">
    <property type="entry name" value="THFDHDRGNASE"/>
</dbReference>
<dbReference type="SUPFAM" id="SSF53223">
    <property type="entry name" value="Aminoacid dehydrogenase-like, N-terminal domain"/>
    <property type="match status" value="1"/>
</dbReference>
<dbReference type="SUPFAM" id="SSF51735">
    <property type="entry name" value="NAD(P)-binding Rossmann-fold domains"/>
    <property type="match status" value="1"/>
</dbReference>
<dbReference type="PROSITE" id="PS00766">
    <property type="entry name" value="THF_DHG_CYH_1"/>
    <property type="match status" value="1"/>
</dbReference>
<dbReference type="PROSITE" id="PS00767">
    <property type="entry name" value="THF_DHG_CYH_2"/>
    <property type="match status" value="1"/>
</dbReference>
<evidence type="ECO:0000255" key="1">
    <source>
        <dbReference type="HAMAP-Rule" id="MF_01576"/>
    </source>
</evidence>
<sequence length="288" mass="30996">MNNIIDGKALANEILADLKLEIQELTSQTNASPKLAIVLVGDNPASIIYVRHKIKNAHKVGIYTLLINLSATIHTNDLISKINELNLDNEISGIIVQLPLPSSIDKNKILSAISPSKDIDGFHPLNVGYLHSGISQGFIPCTALGCLAAIKKYEPNLTGKNVVIIGRSNIVGKPLSALLLKENCSVTICHSKTHNLRSITSKADIVVAAIGSPLKLTAEYFNPESIVIDVGINRISSNKIIGDVDFENVQSKVQYITPVPGGIGPMTIAFLLKNTVKAFKDSLYTLDT</sequence>
<reference key="1">
    <citation type="submission" date="2007-09" db="EMBL/GenBank/DDBJ databases">
        <title>Complete genome sequence of Rickettsia rickettsii.</title>
        <authorList>
            <person name="Madan A."/>
            <person name="Fahey J."/>
            <person name="Helton E."/>
            <person name="Ketteman M."/>
            <person name="Madan A."/>
            <person name="Rodrigues S."/>
            <person name="Sanchez A."/>
            <person name="Dasch G."/>
            <person name="Eremeeva M."/>
        </authorList>
    </citation>
    <scope>NUCLEOTIDE SEQUENCE [LARGE SCALE GENOMIC DNA]</scope>
    <source>
        <strain>Sheila Smith</strain>
    </source>
</reference>
<keyword id="KW-0028">Amino-acid biosynthesis</keyword>
<keyword id="KW-0368">Histidine biosynthesis</keyword>
<keyword id="KW-0378">Hydrolase</keyword>
<keyword id="KW-0486">Methionine biosynthesis</keyword>
<keyword id="KW-0511">Multifunctional enzyme</keyword>
<keyword id="KW-0521">NADP</keyword>
<keyword id="KW-0554">One-carbon metabolism</keyword>
<keyword id="KW-0560">Oxidoreductase</keyword>
<keyword id="KW-0658">Purine biosynthesis</keyword>
<name>FOLD_RICRS</name>
<gene>
    <name evidence="1" type="primary">folD</name>
    <name type="ordered locus">A1G_03600</name>
</gene>
<proteinExistence type="inferred from homology"/>
<comment type="function">
    <text evidence="1">Catalyzes the oxidation of 5,10-methylenetetrahydrofolate to 5,10-methenyltetrahydrofolate and then the hydrolysis of 5,10-methenyltetrahydrofolate to 10-formyltetrahydrofolate.</text>
</comment>
<comment type="catalytic activity">
    <reaction evidence="1">
        <text>(6R)-5,10-methylene-5,6,7,8-tetrahydrofolate + NADP(+) = (6R)-5,10-methenyltetrahydrofolate + NADPH</text>
        <dbReference type="Rhea" id="RHEA:22812"/>
        <dbReference type="ChEBI" id="CHEBI:15636"/>
        <dbReference type="ChEBI" id="CHEBI:57455"/>
        <dbReference type="ChEBI" id="CHEBI:57783"/>
        <dbReference type="ChEBI" id="CHEBI:58349"/>
        <dbReference type="EC" id="1.5.1.5"/>
    </reaction>
</comment>
<comment type="catalytic activity">
    <reaction evidence="1">
        <text>(6R)-5,10-methenyltetrahydrofolate + H2O = (6R)-10-formyltetrahydrofolate + H(+)</text>
        <dbReference type="Rhea" id="RHEA:23700"/>
        <dbReference type="ChEBI" id="CHEBI:15377"/>
        <dbReference type="ChEBI" id="CHEBI:15378"/>
        <dbReference type="ChEBI" id="CHEBI:57455"/>
        <dbReference type="ChEBI" id="CHEBI:195366"/>
        <dbReference type="EC" id="3.5.4.9"/>
    </reaction>
</comment>
<comment type="pathway">
    <text evidence="1">One-carbon metabolism; tetrahydrofolate interconversion.</text>
</comment>
<comment type="subunit">
    <text evidence="1">Homodimer.</text>
</comment>
<comment type="similarity">
    <text evidence="1">Belongs to the tetrahydrofolate dehydrogenase/cyclohydrolase family.</text>
</comment>
<accession>A8GS71</accession>
<feature type="chain" id="PRO_1000069254" description="Bifunctional protein FolD">
    <location>
        <begin position="1"/>
        <end position="288"/>
    </location>
</feature>
<feature type="binding site" evidence="1">
    <location>
        <begin position="166"/>
        <end position="168"/>
    </location>
    <ligand>
        <name>NADP(+)</name>
        <dbReference type="ChEBI" id="CHEBI:58349"/>
    </ligand>
</feature>
<feature type="binding site" evidence="1">
    <location>
        <position position="191"/>
    </location>
    <ligand>
        <name>NADP(+)</name>
        <dbReference type="ChEBI" id="CHEBI:58349"/>
    </ligand>
</feature>
<feature type="binding site" evidence="1">
    <location>
        <position position="232"/>
    </location>
    <ligand>
        <name>NADP(+)</name>
        <dbReference type="ChEBI" id="CHEBI:58349"/>
    </ligand>
</feature>
<protein>
    <recommendedName>
        <fullName evidence="1">Bifunctional protein FolD</fullName>
    </recommendedName>
    <domain>
        <recommendedName>
            <fullName evidence="1">Methylenetetrahydrofolate dehydrogenase</fullName>
            <ecNumber evidence="1">1.5.1.5</ecNumber>
        </recommendedName>
    </domain>
    <domain>
        <recommendedName>
            <fullName evidence="1">Methenyltetrahydrofolate cyclohydrolase</fullName>
            <ecNumber evidence="1">3.5.4.9</ecNumber>
        </recommendedName>
    </domain>
</protein>
<organism>
    <name type="scientific">Rickettsia rickettsii (strain Sheila Smith)</name>
    <dbReference type="NCBI Taxonomy" id="392021"/>
    <lineage>
        <taxon>Bacteria</taxon>
        <taxon>Pseudomonadati</taxon>
        <taxon>Pseudomonadota</taxon>
        <taxon>Alphaproteobacteria</taxon>
        <taxon>Rickettsiales</taxon>
        <taxon>Rickettsiaceae</taxon>
        <taxon>Rickettsieae</taxon>
        <taxon>Rickettsia</taxon>
        <taxon>spotted fever group</taxon>
    </lineage>
</organism>